<comment type="function">
    <text evidence="8">Catalytic subunit of blood coagulation factor X-activating enzyme. Activates coagulation factor X (F10) by cleaving the Arg-Ile bond and is also able to activate coagulation factor IX (F9) and protein S (PROS1) by specific cleavage of Arg-Ile and Arg-Val bonds.</text>
</comment>
<comment type="catalytic activity">
    <reaction evidence="6 9">
        <text>Specifically activates several components of the blood clotting system, including coagulation factor X, coagulation factor IX and protein C by cleavage of Arg-|-Xaa bonds. Has no action on insulin B chain.</text>
        <dbReference type="EC" id="3.4.24.58"/>
    </reaction>
</comment>
<comment type="cofactor">
    <cofactor evidence="1">
        <name>Zn(2+)</name>
        <dbReference type="ChEBI" id="CHEBI:29105"/>
    </cofactor>
    <text evidence="1">Binds 1 zinc ion per subunit.</text>
</comment>
<comment type="subunit">
    <text evidence="7 9">Heterotrimer; disulfide-linked. The heterotrimer consists of 1 heavy chain and 2 light chains (lectins): LC1 and LC2.</text>
</comment>
<comment type="subcellular location">
    <subcellularLocation>
        <location>Secreted</location>
    </subcellularLocation>
</comment>
<comment type="tissue specificity">
    <text>Expressed by the venom gland.</text>
</comment>
<comment type="PTM">
    <text evidence="6 7 8 9">N-glycosylated; probably required for conformation. Removal of easily accessible sugars does not change its functional capacity, but removal of the core sugars with N-glycanase causes a virtually complete loss of enzyme activity, apparently as a result of major conformational changes in the molecule. Not O-glycosylated.</text>
</comment>
<comment type="similarity">
    <text evidence="10">Belongs to the venom metalloproteinase (M12B) family. P-III subfamily. P-IIId sub-subfamily.</text>
</comment>
<organism>
    <name type="scientific">Daboia siamensis</name>
    <name type="common">Eastern Russel's viper</name>
    <name type="synonym">Daboia russelii siamensis</name>
    <dbReference type="NCBI Taxonomy" id="343250"/>
    <lineage>
        <taxon>Eukaryota</taxon>
        <taxon>Metazoa</taxon>
        <taxon>Chordata</taxon>
        <taxon>Craniata</taxon>
        <taxon>Vertebrata</taxon>
        <taxon>Euteleostomi</taxon>
        <taxon>Lepidosauria</taxon>
        <taxon>Squamata</taxon>
        <taxon>Bifurcata</taxon>
        <taxon>Unidentata</taxon>
        <taxon>Episquamata</taxon>
        <taxon>Toxicofera</taxon>
        <taxon>Serpentes</taxon>
        <taxon>Colubroidea</taxon>
        <taxon>Viperidae</taxon>
        <taxon>Viperinae</taxon>
        <taxon>Daboia</taxon>
    </lineage>
</organism>
<evidence type="ECO:0000250" key="1"/>
<evidence type="ECO:0000255" key="2"/>
<evidence type="ECO:0000255" key="3">
    <source>
        <dbReference type="PROSITE-ProRule" id="PRU00068"/>
    </source>
</evidence>
<evidence type="ECO:0000255" key="4">
    <source>
        <dbReference type="PROSITE-ProRule" id="PRU00276"/>
    </source>
</evidence>
<evidence type="ECO:0000255" key="5">
    <source>
        <dbReference type="PROSITE-ProRule" id="PRU10095"/>
    </source>
</evidence>
<evidence type="ECO:0000269" key="6">
    <source>
    </source>
</evidence>
<evidence type="ECO:0000269" key="7">
    <source>
    </source>
</evidence>
<evidence type="ECO:0000269" key="8">
    <source>
    </source>
</evidence>
<evidence type="ECO:0000269" key="9">
    <source>
    </source>
</evidence>
<evidence type="ECO:0000305" key="10"/>
<evidence type="ECO:0007829" key="11">
    <source>
        <dbReference type="PDB" id="2E3X"/>
    </source>
</evidence>
<keyword id="KW-0002">3D-structure</keyword>
<keyword id="KW-1204">Blood coagulation cascade activating toxin</keyword>
<keyword id="KW-0106">Calcium</keyword>
<keyword id="KW-0903">Direct protein sequencing</keyword>
<keyword id="KW-1015">Disulfide bond</keyword>
<keyword id="KW-0325">Glycoprotein</keyword>
<keyword id="KW-1199">Hemostasis impairing toxin</keyword>
<keyword id="KW-0378">Hydrolase</keyword>
<keyword id="KW-0479">Metal-binding</keyword>
<keyword id="KW-0482">Metalloprotease</keyword>
<keyword id="KW-0645">Protease</keyword>
<keyword id="KW-0964">Secreted</keyword>
<keyword id="KW-0732">Signal</keyword>
<keyword id="KW-0800">Toxin</keyword>
<keyword id="KW-0862">Zinc</keyword>
<proteinExistence type="evidence at protein level"/>
<feature type="signal peptide" evidence="2">
    <location>
        <begin position="1"/>
        <end position="20"/>
    </location>
</feature>
<feature type="propeptide" id="PRO_0000355226" evidence="6 9">
    <location>
        <begin position="21"/>
        <end position="188"/>
    </location>
</feature>
<feature type="chain" id="PRO_0000078204" description="Coagulation factor X-activating enzyme heavy chain">
    <location>
        <begin position="189"/>
        <end position="619"/>
    </location>
</feature>
<feature type="domain" description="Peptidase M12B" evidence="4">
    <location>
        <begin position="199"/>
        <end position="393"/>
    </location>
</feature>
<feature type="domain" description="Disintegrin" evidence="3">
    <location>
        <begin position="401"/>
        <end position="487"/>
    </location>
</feature>
<feature type="short sequence motif" description="D/ECD-tripeptide">
    <location>
        <begin position="465"/>
        <end position="467"/>
    </location>
</feature>
<feature type="active site" evidence="4 5">
    <location>
        <position position="334"/>
    </location>
</feature>
<feature type="binding site">
    <location>
        <position position="333"/>
    </location>
    <ligand>
        <name>Zn(2+)</name>
        <dbReference type="ChEBI" id="CHEBI:29105"/>
        <note>catalytic</note>
    </ligand>
</feature>
<feature type="binding site">
    <location>
        <position position="337"/>
    </location>
    <ligand>
        <name>Zn(2+)</name>
        <dbReference type="ChEBI" id="CHEBI:29105"/>
        <note>catalytic</note>
    </ligand>
</feature>
<feature type="binding site">
    <location>
        <position position="343"/>
    </location>
    <ligand>
        <name>Zn(2+)</name>
        <dbReference type="ChEBI" id="CHEBI:29105"/>
        <note>catalytic</note>
    </ligand>
</feature>
<feature type="binding site">
    <location>
        <position position="403"/>
    </location>
    <ligand>
        <name>Ca(2+)</name>
        <dbReference type="ChEBI" id="CHEBI:29108"/>
        <label>1</label>
    </ligand>
</feature>
<feature type="binding site">
    <location>
        <position position="406"/>
    </location>
    <ligand>
        <name>Ca(2+)</name>
        <dbReference type="ChEBI" id="CHEBI:29108"/>
        <label>1</label>
    </ligand>
</feature>
<feature type="binding site">
    <location>
        <position position="408"/>
    </location>
    <ligand>
        <name>Ca(2+)</name>
        <dbReference type="ChEBI" id="CHEBI:29108"/>
        <label>1</label>
    </ligand>
</feature>
<feature type="binding site">
    <location>
        <position position="410"/>
    </location>
    <ligand>
        <name>Ca(2+)</name>
        <dbReference type="ChEBI" id="CHEBI:29108"/>
        <label>1</label>
    </ligand>
</feature>
<feature type="binding site">
    <location>
        <position position="413"/>
    </location>
    <ligand>
        <name>Ca(2+)</name>
        <dbReference type="ChEBI" id="CHEBI:29108"/>
        <label>1</label>
    </ligand>
</feature>
<feature type="binding site">
    <location>
        <position position="416"/>
    </location>
    <ligand>
        <name>Ca(2+)</name>
        <dbReference type="ChEBI" id="CHEBI:29108"/>
        <label>1</label>
    </ligand>
</feature>
<feature type="binding site">
    <location>
        <position position="467"/>
    </location>
    <ligand>
        <name>Ca(2+)</name>
        <dbReference type="ChEBI" id="CHEBI:29108"/>
        <label>2</label>
    </ligand>
</feature>
<feature type="binding site">
    <location>
        <position position="468"/>
    </location>
    <ligand>
        <name>Ca(2+)</name>
        <dbReference type="ChEBI" id="CHEBI:29108"/>
        <label>2</label>
    </ligand>
</feature>
<feature type="binding site">
    <location>
        <position position="470"/>
    </location>
    <ligand>
        <name>Ca(2+)</name>
        <dbReference type="ChEBI" id="CHEBI:29108"/>
        <label>2</label>
    </ligand>
</feature>
<feature type="binding site">
    <location>
        <position position="482"/>
    </location>
    <ligand>
        <name>Ca(2+)</name>
        <dbReference type="ChEBI" id="CHEBI:29108"/>
        <label>2</label>
    </ligand>
</feature>
<feature type="binding site">
    <location>
        <position position="483"/>
    </location>
    <ligand>
        <name>Ca(2+)</name>
        <dbReference type="ChEBI" id="CHEBI:29108"/>
        <label>2</label>
    </ligand>
</feature>
<feature type="glycosylation site" description="N-linked (GlcNAc...) (complex) asparagine" evidence="9">
    <location>
        <position position="216"/>
    </location>
</feature>
<feature type="glycosylation site" description="N-linked (GlcNAc...) (complex) asparagine" evidence="7 9">
    <location>
        <position position="257"/>
    </location>
</feature>
<feature type="glycosylation site" description="N-linked (GlcNAc...) (complex) asparagine" evidence="9">
    <location>
        <position position="351"/>
    </location>
</feature>
<feature type="glycosylation site" description="N-linked (GlcNAc...) (complex) asparagine" evidence="7 9">
    <location>
        <position position="371"/>
    </location>
</feature>
<feature type="disulfide bond" evidence="7">
    <location>
        <begin position="215"/>
        <end position="251"/>
    </location>
</feature>
<feature type="disulfide bond" evidence="7">
    <location>
        <begin position="308"/>
        <end position="388"/>
    </location>
</feature>
<feature type="disulfide bond" evidence="7">
    <location>
        <begin position="348"/>
        <end position="372"/>
    </location>
</feature>
<feature type="disulfide bond" evidence="7">
    <location>
        <begin position="350"/>
        <end position="355"/>
    </location>
</feature>
<feature type="disulfide bond" evidence="7">
    <location>
        <begin position="404"/>
        <end position="433"/>
    </location>
</feature>
<feature type="disulfide bond" evidence="7">
    <location>
        <begin position="415"/>
        <end position="428"/>
    </location>
</feature>
<feature type="disulfide bond" evidence="7">
    <location>
        <begin position="417"/>
        <end position="423"/>
    </location>
</feature>
<feature type="disulfide bond" evidence="7">
    <location>
        <begin position="427"/>
        <end position="450"/>
    </location>
</feature>
<feature type="disulfide bond" evidence="7">
    <location>
        <begin position="441"/>
        <end position="447"/>
    </location>
</feature>
<feature type="disulfide bond" evidence="7">
    <location>
        <begin position="446"/>
        <end position="472"/>
    </location>
</feature>
<feature type="disulfide bond" evidence="7">
    <location>
        <begin position="459"/>
        <end position="479"/>
    </location>
</feature>
<feature type="disulfide bond" evidence="7">
    <location>
        <begin position="466"/>
        <end position="498"/>
    </location>
</feature>
<feature type="disulfide bond" evidence="7">
    <location>
        <begin position="491"/>
        <end position="503"/>
    </location>
</feature>
<feature type="disulfide bond" evidence="7">
    <location>
        <begin position="510"/>
        <end position="560"/>
    </location>
</feature>
<feature type="disulfide bond" evidence="7">
    <location>
        <begin position="525"/>
        <end position="571"/>
    </location>
</feature>
<feature type="disulfide bond" evidence="7">
    <location>
        <begin position="538"/>
        <end position="548"/>
    </location>
</feature>
<feature type="disulfide bond" evidence="7">
    <location>
        <begin position="555"/>
        <end position="597"/>
    </location>
</feature>
<feature type="disulfide bond" description="Interchain (with C-158 in coagulation factor X-activating enzyme light chain LC2)" evidence="3 4 7">
    <location>
        <position position="577"/>
    </location>
</feature>
<feature type="disulfide bond" evidence="7">
    <location>
        <begin position="591"/>
        <end position="603"/>
    </location>
</feature>
<feature type="sequence conflict" description="In Ref. 3; AA sequence." evidence="10" ref="3">
    <original>S</original>
    <variation>A</variation>
    <location>
        <position position="191"/>
    </location>
</feature>
<feature type="strand" evidence="11">
    <location>
        <begin position="199"/>
        <end position="207"/>
    </location>
</feature>
<feature type="turn" evidence="11">
    <location>
        <begin position="209"/>
        <end position="214"/>
    </location>
</feature>
<feature type="helix" evidence="11">
    <location>
        <begin position="219"/>
        <end position="235"/>
    </location>
</feature>
<feature type="helix" evidence="11">
    <location>
        <begin position="236"/>
        <end position="238"/>
    </location>
</feature>
<feature type="strand" evidence="11">
    <location>
        <begin position="240"/>
        <end position="249"/>
    </location>
</feature>
<feature type="helix" evidence="11">
    <location>
        <begin position="262"/>
        <end position="275"/>
    </location>
</feature>
<feature type="helix" evidence="11">
    <location>
        <begin position="277"/>
        <end position="280"/>
    </location>
</feature>
<feature type="strand" evidence="11">
    <location>
        <begin position="284"/>
        <end position="290"/>
    </location>
</feature>
<feature type="helix" evidence="11">
    <location>
        <begin position="295"/>
        <end position="297"/>
    </location>
</feature>
<feature type="strand" evidence="11">
    <location>
        <begin position="300"/>
        <end position="302"/>
    </location>
</feature>
<feature type="turn" evidence="11">
    <location>
        <begin position="310"/>
        <end position="312"/>
    </location>
</feature>
<feature type="strand" evidence="11">
    <location>
        <begin position="313"/>
        <end position="318"/>
    </location>
</feature>
<feature type="helix" evidence="11">
    <location>
        <begin position="324"/>
        <end position="337"/>
    </location>
</feature>
<feature type="turn" evidence="11">
    <location>
        <begin position="338"/>
        <end position="340"/>
    </location>
</feature>
<feature type="helix" evidence="11">
    <location>
        <begin position="371"/>
        <end position="384"/>
    </location>
</feature>
<feature type="helix" evidence="11">
    <location>
        <begin position="395"/>
        <end position="397"/>
    </location>
</feature>
<feature type="turn" evidence="11">
    <location>
        <begin position="430"/>
        <end position="432"/>
    </location>
</feature>
<feature type="strand" evidence="11">
    <location>
        <begin position="442"/>
        <end position="444"/>
    </location>
</feature>
<feature type="strand" evidence="11">
    <location>
        <begin position="458"/>
        <end position="460"/>
    </location>
</feature>
<feature type="turn" evidence="11">
    <location>
        <begin position="492"/>
        <end position="495"/>
    </location>
</feature>
<feature type="helix" evidence="11">
    <location>
        <begin position="506"/>
        <end position="514"/>
    </location>
</feature>
<feature type="helix" evidence="11">
    <location>
        <begin position="523"/>
        <end position="530"/>
    </location>
</feature>
<feature type="strand" evidence="11">
    <location>
        <begin position="534"/>
        <end position="536"/>
    </location>
</feature>
<feature type="helix" evidence="11">
    <location>
        <begin position="553"/>
        <end position="555"/>
    </location>
</feature>
<feature type="strand" evidence="11">
    <location>
        <begin position="570"/>
        <end position="573"/>
    </location>
</feature>
<feature type="strand" evidence="11">
    <location>
        <begin position="590"/>
        <end position="592"/>
    </location>
</feature>
<feature type="strand" evidence="11">
    <location>
        <begin position="595"/>
        <end position="597"/>
    </location>
</feature>
<feature type="strand" evidence="11">
    <location>
        <begin position="603"/>
        <end position="605"/>
    </location>
</feature>
<feature type="helix" evidence="11">
    <location>
        <begin position="606"/>
        <end position="609"/>
    </location>
</feature>
<dbReference type="EC" id="3.4.24.58"/>
<dbReference type="EMBL" id="DQ137799">
    <property type="protein sequence ID" value="AAZ39881.1"/>
    <property type="molecule type" value="mRNA"/>
</dbReference>
<dbReference type="PIR" id="A42972">
    <property type="entry name" value="A42972"/>
</dbReference>
<dbReference type="PDB" id="2E3X">
    <property type="method" value="X-ray"/>
    <property type="resolution" value="2.91 A"/>
    <property type="chains" value="A=189-615"/>
</dbReference>
<dbReference type="PDBsum" id="2E3X"/>
<dbReference type="SMR" id="Q7LZ61"/>
<dbReference type="MEROPS" id="M12.158"/>
<dbReference type="iPTMnet" id="Q7LZ61"/>
<dbReference type="KEGG" id="ag:AAZ39881"/>
<dbReference type="BRENDA" id="3.4.24.58">
    <property type="organism ID" value="6667"/>
</dbReference>
<dbReference type="EvolutionaryTrace" id="Q7LZ61"/>
<dbReference type="GO" id="GO:0005576">
    <property type="term" value="C:extracellular region"/>
    <property type="evidence" value="ECO:0007669"/>
    <property type="project" value="UniProtKB-SubCell"/>
</dbReference>
<dbReference type="GO" id="GO:0005886">
    <property type="term" value="C:plasma membrane"/>
    <property type="evidence" value="ECO:0007669"/>
    <property type="project" value="TreeGrafter"/>
</dbReference>
<dbReference type="GO" id="GO:0046872">
    <property type="term" value="F:metal ion binding"/>
    <property type="evidence" value="ECO:0007669"/>
    <property type="project" value="UniProtKB-KW"/>
</dbReference>
<dbReference type="GO" id="GO:0004222">
    <property type="term" value="F:metalloendopeptidase activity"/>
    <property type="evidence" value="ECO:0007669"/>
    <property type="project" value="InterPro"/>
</dbReference>
<dbReference type="GO" id="GO:0090729">
    <property type="term" value="F:toxin activity"/>
    <property type="evidence" value="ECO:0007669"/>
    <property type="project" value="UniProtKB-KW"/>
</dbReference>
<dbReference type="GO" id="GO:0006508">
    <property type="term" value="P:proteolysis"/>
    <property type="evidence" value="ECO:0007669"/>
    <property type="project" value="UniProtKB-KW"/>
</dbReference>
<dbReference type="CDD" id="cd04269">
    <property type="entry name" value="ZnMc_adamalysin_II_like"/>
    <property type="match status" value="1"/>
</dbReference>
<dbReference type="FunFam" id="3.40.390.10:FF:000002">
    <property type="entry name" value="Disintegrin and metalloproteinase domain-containing protein 22"/>
    <property type="match status" value="1"/>
</dbReference>
<dbReference type="FunFam" id="4.10.70.10:FF:000001">
    <property type="entry name" value="Disintegrin and metalloproteinase domain-containing protein 22"/>
    <property type="match status" value="1"/>
</dbReference>
<dbReference type="Gene3D" id="3.40.390.10">
    <property type="entry name" value="Collagenase (Catalytic Domain)"/>
    <property type="match status" value="1"/>
</dbReference>
<dbReference type="Gene3D" id="4.10.70.10">
    <property type="entry name" value="Disintegrin domain"/>
    <property type="match status" value="1"/>
</dbReference>
<dbReference type="InterPro" id="IPR006586">
    <property type="entry name" value="ADAM_Cys-rich"/>
</dbReference>
<dbReference type="InterPro" id="IPR018358">
    <property type="entry name" value="Disintegrin_CS"/>
</dbReference>
<dbReference type="InterPro" id="IPR001762">
    <property type="entry name" value="Disintegrin_dom"/>
</dbReference>
<dbReference type="InterPro" id="IPR036436">
    <property type="entry name" value="Disintegrin_dom_sf"/>
</dbReference>
<dbReference type="InterPro" id="IPR024079">
    <property type="entry name" value="MetalloPept_cat_dom_sf"/>
</dbReference>
<dbReference type="InterPro" id="IPR001590">
    <property type="entry name" value="Peptidase_M12B"/>
</dbReference>
<dbReference type="InterPro" id="IPR002870">
    <property type="entry name" value="Peptidase_M12B_N"/>
</dbReference>
<dbReference type="InterPro" id="IPR034027">
    <property type="entry name" value="Reprolysin_adamalysin"/>
</dbReference>
<dbReference type="PANTHER" id="PTHR11905">
    <property type="entry name" value="ADAM A DISINTEGRIN AND METALLOPROTEASE DOMAIN"/>
    <property type="match status" value="1"/>
</dbReference>
<dbReference type="PANTHER" id="PTHR11905:SF32">
    <property type="entry name" value="DISINTEGRIN AND METALLOPROTEINASE DOMAIN-CONTAINING PROTEIN 28"/>
    <property type="match status" value="1"/>
</dbReference>
<dbReference type="Pfam" id="PF08516">
    <property type="entry name" value="ADAM_CR"/>
    <property type="match status" value="1"/>
</dbReference>
<dbReference type="Pfam" id="PF00200">
    <property type="entry name" value="Disintegrin"/>
    <property type="match status" value="1"/>
</dbReference>
<dbReference type="Pfam" id="PF01562">
    <property type="entry name" value="Pep_M12B_propep"/>
    <property type="match status" value="1"/>
</dbReference>
<dbReference type="Pfam" id="PF01421">
    <property type="entry name" value="Reprolysin"/>
    <property type="match status" value="1"/>
</dbReference>
<dbReference type="PRINTS" id="PR00289">
    <property type="entry name" value="DISINTEGRIN"/>
</dbReference>
<dbReference type="SMART" id="SM00608">
    <property type="entry name" value="ACR"/>
    <property type="match status" value="1"/>
</dbReference>
<dbReference type="SMART" id="SM00050">
    <property type="entry name" value="DISIN"/>
    <property type="match status" value="1"/>
</dbReference>
<dbReference type="SUPFAM" id="SSF57552">
    <property type="entry name" value="Blood coagulation inhibitor (disintegrin)"/>
    <property type="match status" value="1"/>
</dbReference>
<dbReference type="SUPFAM" id="SSF55486">
    <property type="entry name" value="Metalloproteases ('zincins'), catalytic domain"/>
    <property type="match status" value="1"/>
</dbReference>
<dbReference type="PROSITE" id="PS50215">
    <property type="entry name" value="ADAM_MEPRO"/>
    <property type="match status" value="1"/>
</dbReference>
<dbReference type="PROSITE" id="PS00427">
    <property type="entry name" value="DISINTEGRIN_1"/>
    <property type="match status" value="1"/>
</dbReference>
<dbReference type="PROSITE" id="PS50214">
    <property type="entry name" value="DISINTEGRIN_2"/>
    <property type="match status" value="1"/>
</dbReference>
<dbReference type="PROSITE" id="PS00142">
    <property type="entry name" value="ZINC_PROTEASE"/>
    <property type="match status" value="1"/>
</dbReference>
<name>VM3CX_DABSI</name>
<reference key="1">
    <citation type="journal article" date="2008" name="FEBS J.">
        <title>New insights into the functions and N-glycan structures of factor X activator from Russell's viper venom.</title>
        <authorList>
            <person name="Chen H.S."/>
            <person name="Chen J.M."/>
            <person name="Lin C.W."/>
            <person name="Khoo K.H."/>
            <person name="Tsai I.H."/>
        </authorList>
    </citation>
    <scope>NUCLEOTIDE SEQUENCE [MRNA]</scope>
    <scope>FUNCTION</scope>
    <scope>CARBOHYDRATE COMPOSITION</scope>
    <source>
        <tissue>Venom</tissue>
        <tissue>Venom gland</tissue>
    </source>
</reference>
<reference key="2">
    <citation type="journal article" date="1992" name="J. Biol. Chem.">
        <title>Coagulation factor X activating enzyme from Russell's viper venom (RVV-X). A novel metalloproteinase with disintegrin (platelet aggregation inhibitor)-like and C-type lectin-like domains.</title>
        <authorList>
            <person name="Takeya H."/>
            <person name="Nishida S."/>
            <person name="Miyata T."/>
            <person name="Kawada S."/>
            <person name="Saisaka Y."/>
            <person name="Morita T."/>
            <person name="Iwanaga S."/>
        </authorList>
    </citation>
    <scope>PROTEIN SEQUENCE OF 189-429</scope>
    <scope>ENZYME ACTIVITY</scope>
    <scope>GLYCOSYLATION</scope>
    <source>
        <tissue>Venom</tissue>
    </source>
</reference>
<reference key="3">
    <citation type="journal article" date="1994" name="J. Biol. Chem.">
        <title>Factor X-activating glycoprotein of Russell's viper venom. Polypeptide composition and characterization of the carbohydrate moieties.</title>
        <authorList>
            <person name="Gowda D.C."/>
            <person name="Jackson C.M."/>
            <person name="Hensley P."/>
            <person name="Davidson E.A."/>
        </authorList>
    </citation>
    <scope>PROTEIN SEQUENCE OF 189-207</scope>
    <scope>ENZYME ACTIVITY</scope>
    <scope>SUBUNIT</scope>
    <scope>GLYCOSYLATION AT ASN-216; ASN-257; ASN-351 AND ASN-371</scope>
    <source>
        <tissue>Venom</tissue>
    </source>
</reference>
<reference key="4">
    <citation type="journal article" date="1996" name="Biochemistry">
        <title>Core sugar residues of the N-linked oligosaccharides of Russell's viper venom factor X-activator maintain functionally active polypeptide structure.</title>
        <authorList>
            <person name="Gowda D.C."/>
            <person name="Jackson C.M."/>
            <person name="Kurzban G.P."/>
            <person name="McPhie P."/>
            <person name="Davidson E.A."/>
        </authorList>
    </citation>
    <scope>ROLE OF GLYCOSYLATION</scope>
</reference>
<reference key="5">
    <citation type="journal article" date="2007" name="FEBS Lett.">
        <title>Crystal structure of RVV-X: an example of evolutionary gain of specificity by ADAM proteinases.</title>
        <authorList>
            <person name="Takeda S."/>
            <person name="Igarashi T."/>
            <person name="Mori H."/>
        </authorList>
    </citation>
    <scope>X-RAY CRYSTALLOGRAPHY (2.91 ANGSTROMS) OF 189-615 IN COMPLEX WITH LC1 AND LC2</scope>
    <scope>METAL-BINDING SITES</scope>
    <scope>GLYCOSYLATION AT ASN-257 AND ASN-371</scope>
    <scope>SUBUNIT</scope>
    <scope>DISULFIDE BONDS</scope>
</reference>
<reference key="6">
    <citation type="journal article" date="2001" name="Haemostasis">
        <title>Snake venom activators of factor X: an overview.</title>
        <authorList>
            <person name="Tans G."/>
            <person name="Rosing J."/>
        </authorList>
    </citation>
    <scope>REVIEW</scope>
</reference>
<sequence length="619" mass="69648">MMQVLLVTISLAVFPYQGSSIILESGNVNDYEVVYPQKVTALPKGAVQQPEQKYEDTMQYEFEVNGEPVVLHLEKNKILFSEDYSETHYYPDGREITTNPPVEDHCYYHGRIQNDAHSSASISACNGLKGHFKLRGEMYFIEPLKLSNSEAHAVYKYENIEKEDEIPKMCGVTQTNWESDKPIKKASQLVSTSAQFNKIFIELVIIVDHSMAKKCNSTATNTKIYEIVNSANEIFNPLNIHVTLIGVEFWCDRDLINVTSSADETLNSFGEWRASDLMTRKSHDNALLFTDMRFDLNTLGITFLAGMCQAYRSVEIVQEQGNRNFKTAVIMAHELSHNLGMYHDGKNCICNDSSCVMSPVLSDQPSKLFSNCSIHDYQRYLTRYKPKCIFNPPLRKDIVSPPVCGNEIWEEGEECDCGSPANCQNPCCDAATCKLKPGAECGNGLCCYQCKIKTAGTVCRRARDECDVPEHCTGQSAECPRDQLQQNGKPCQNNRGYCYNGDCPIMRNQCISLFGSRANVAKDSCFQENLKGSYYGYCRKENGRKIPCAPQDVKCGRLFCLNNSPRNKNPCNMHYSCMDQHKGMVDPGTKCEDGKVCNNKRQCVDVNTAYQSTTGFSQI</sequence>
<accession>Q7LZ61</accession>
<accession>B4UT23</accession>
<protein>
    <recommendedName>
        <fullName>Coagulation factor X-activating enzyme heavy chain</fullName>
        <ecNumber>3.4.24.58</ecNumber>
    </recommendedName>
    <alternativeName>
        <fullName>Coagulation factor X-activating enzyme chain alpha</fullName>
    </alternativeName>
    <alternativeName>
        <fullName>RVV-X heavy chain</fullName>
    </alternativeName>
    <alternativeName>
        <fullName>Russellysin</fullName>
    </alternativeName>
    <alternativeName>
        <fullName>Snake venom metalloproteinase</fullName>
        <shortName>SVMP</shortName>
    </alternativeName>
</protein>